<name>RF3_LEGPA</name>
<keyword id="KW-0963">Cytoplasm</keyword>
<keyword id="KW-0342">GTP-binding</keyword>
<keyword id="KW-0547">Nucleotide-binding</keyword>
<keyword id="KW-0648">Protein biosynthesis</keyword>
<comment type="function">
    <text evidence="1">Increases the formation of ribosomal termination complexes and stimulates activities of RF-1 and RF-2. It binds guanine nucleotides and has strong preference for UGA stop codons. It may interact directly with the ribosome. The stimulation of RF-1 and RF-2 is significantly reduced by GTP and GDP, but not by GMP.</text>
</comment>
<comment type="subcellular location">
    <subcellularLocation>
        <location evidence="1">Cytoplasm</location>
    </subcellularLocation>
</comment>
<comment type="similarity">
    <text evidence="1">Belongs to the TRAFAC class translation factor GTPase superfamily. Classic translation factor GTPase family. PrfC subfamily.</text>
</comment>
<evidence type="ECO:0000255" key="1">
    <source>
        <dbReference type="HAMAP-Rule" id="MF_00072"/>
    </source>
</evidence>
<proteinExistence type="inferred from homology"/>
<dbReference type="EMBL" id="CR628336">
    <property type="protein sequence ID" value="CAH12086.1"/>
    <property type="molecule type" value="Genomic_DNA"/>
</dbReference>
<dbReference type="RefSeq" id="WP_010946608.1">
    <property type="nucleotide sequence ID" value="NC_006368.1"/>
</dbReference>
<dbReference type="SMR" id="Q5X6N0"/>
<dbReference type="KEGG" id="lpp:lpp0935"/>
<dbReference type="LegioList" id="lpp0935"/>
<dbReference type="HOGENOM" id="CLU_002794_2_1_6"/>
<dbReference type="GO" id="GO:0005829">
    <property type="term" value="C:cytosol"/>
    <property type="evidence" value="ECO:0007669"/>
    <property type="project" value="TreeGrafter"/>
</dbReference>
<dbReference type="GO" id="GO:0005525">
    <property type="term" value="F:GTP binding"/>
    <property type="evidence" value="ECO:0007669"/>
    <property type="project" value="UniProtKB-UniRule"/>
</dbReference>
<dbReference type="GO" id="GO:0003924">
    <property type="term" value="F:GTPase activity"/>
    <property type="evidence" value="ECO:0007669"/>
    <property type="project" value="InterPro"/>
</dbReference>
<dbReference type="GO" id="GO:0097216">
    <property type="term" value="F:guanosine tetraphosphate binding"/>
    <property type="evidence" value="ECO:0007669"/>
    <property type="project" value="UniProtKB-ARBA"/>
</dbReference>
<dbReference type="GO" id="GO:0016150">
    <property type="term" value="F:translation release factor activity, codon nonspecific"/>
    <property type="evidence" value="ECO:0007669"/>
    <property type="project" value="TreeGrafter"/>
</dbReference>
<dbReference type="GO" id="GO:0016149">
    <property type="term" value="F:translation release factor activity, codon specific"/>
    <property type="evidence" value="ECO:0007669"/>
    <property type="project" value="UniProtKB-UniRule"/>
</dbReference>
<dbReference type="GO" id="GO:0006449">
    <property type="term" value="P:regulation of translational termination"/>
    <property type="evidence" value="ECO:0007669"/>
    <property type="project" value="UniProtKB-UniRule"/>
</dbReference>
<dbReference type="CDD" id="cd04169">
    <property type="entry name" value="RF3"/>
    <property type="match status" value="1"/>
</dbReference>
<dbReference type="CDD" id="cd03689">
    <property type="entry name" value="RF3_II"/>
    <property type="match status" value="1"/>
</dbReference>
<dbReference type="CDD" id="cd16259">
    <property type="entry name" value="RF3_III"/>
    <property type="match status" value="1"/>
</dbReference>
<dbReference type="FunFam" id="2.40.30.10:FF:000040">
    <property type="entry name" value="Peptide chain release factor 3"/>
    <property type="match status" value="1"/>
</dbReference>
<dbReference type="FunFam" id="3.30.70.3280:FF:000001">
    <property type="entry name" value="Peptide chain release factor 3"/>
    <property type="match status" value="1"/>
</dbReference>
<dbReference type="FunFam" id="3.40.50.300:FF:000542">
    <property type="entry name" value="Peptide chain release factor 3"/>
    <property type="match status" value="1"/>
</dbReference>
<dbReference type="Gene3D" id="3.40.50.300">
    <property type="entry name" value="P-loop containing nucleotide triphosphate hydrolases"/>
    <property type="match status" value="2"/>
</dbReference>
<dbReference type="Gene3D" id="3.30.70.3280">
    <property type="entry name" value="Peptide chain release factor 3, domain III"/>
    <property type="match status" value="1"/>
</dbReference>
<dbReference type="HAMAP" id="MF_00072">
    <property type="entry name" value="Rel_fac_3"/>
    <property type="match status" value="1"/>
</dbReference>
<dbReference type="InterPro" id="IPR053905">
    <property type="entry name" value="EF-G-like_DII"/>
</dbReference>
<dbReference type="InterPro" id="IPR035647">
    <property type="entry name" value="EFG_III/V"/>
</dbReference>
<dbReference type="InterPro" id="IPR031157">
    <property type="entry name" value="G_TR_CS"/>
</dbReference>
<dbReference type="InterPro" id="IPR027417">
    <property type="entry name" value="P-loop_NTPase"/>
</dbReference>
<dbReference type="InterPro" id="IPR004548">
    <property type="entry name" value="PrfC"/>
</dbReference>
<dbReference type="InterPro" id="IPR032090">
    <property type="entry name" value="RF3_C"/>
</dbReference>
<dbReference type="InterPro" id="IPR038467">
    <property type="entry name" value="RF3_dom_3_sf"/>
</dbReference>
<dbReference type="InterPro" id="IPR041732">
    <property type="entry name" value="RF3_GTP-bd"/>
</dbReference>
<dbReference type="InterPro" id="IPR005225">
    <property type="entry name" value="Small_GTP-bd"/>
</dbReference>
<dbReference type="InterPro" id="IPR000795">
    <property type="entry name" value="T_Tr_GTP-bd_dom"/>
</dbReference>
<dbReference type="InterPro" id="IPR009000">
    <property type="entry name" value="Transl_B-barrel_sf"/>
</dbReference>
<dbReference type="NCBIfam" id="TIGR00503">
    <property type="entry name" value="prfC"/>
    <property type="match status" value="1"/>
</dbReference>
<dbReference type="NCBIfam" id="NF001964">
    <property type="entry name" value="PRK00741.1"/>
    <property type="match status" value="1"/>
</dbReference>
<dbReference type="NCBIfam" id="TIGR00231">
    <property type="entry name" value="small_GTP"/>
    <property type="match status" value="1"/>
</dbReference>
<dbReference type="PANTHER" id="PTHR43556">
    <property type="entry name" value="PEPTIDE CHAIN RELEASE FACTOR RF3"/>
    <property type="match status" value="1"/>
</dbReference>
<dbReference type="PANTHER" id="PTHR43556:SF2">
    <property type="entry name" value="PEPTIDE CHAIN RELEASE FACTOR RF3"/>
    <property type="match status" value="1"/>
</dbReference>
<dbReference type="Pfam" id="PF22042">
    <property type="entry name" value="EF-G_D2"/>
    <property type="match status" value="1"/>
</dbReference>
<dbReference type="Pfam" id="PF00009">
    <property type="entry name" value="GTP_EFTU"/>
    <property type="match status" value="1"/>
</dbReference>
<dbReference type="Pfam" id="PF16658">
    <property type="entry name" value="RF3_C"/>
    <property type="match status" value="1"/>
</dbReference>
<dbReference type="PRINTS" id="PR00315">
    <property type="entry name" value="ELONGATNFCT"/>
</dbReference>
<dbReference type="SUPFAM" id="SSF54980">
    <property type="entry name" value="EF-G C-terminal domain-like"/>
    <property type="match status" value="1"/>
</dbReference>
<dbReference type="SUPFAM" id="SSF52540">
    <property type="entry name" value="P-loop containing nucleoside triphosphate hydrolases"/>
    <property type="match status" value="1"/>
</dbReference>
<dbReference type="SUPFAM" id="SSF50447">
    <property type="entry name" value="Translation proteins"/>
    <property type="match status" value="1"/>
</dbReference>
<dbReference type="PROSITE" id="PS00301">
    <property type="entry name" value="G_TR_1"/>
    <property type="match status" value="1"/>
</dbReference>
<dbReference type="PROSITE" id="PS51722">
    <property type="entry name" value="G_TR_2"/>
    <property type="match status" value="1"/>
</dbReference>
<organism>
    <name type="scientific">Legionella pneumophila (strain Paris)</name>
    <dbReference type="NCBI Taxonomy" id="297246"/>
    <lineage>
        <taxon>Bacteria</taxon>
        <taxon>Pseudomonadati</taxon>
        <taxon>Pseudomonadota</taxon>
        <taxon>Gammaproteobacteria</taxon>
        <taxon>Legionellales</taxon>
        <taxon>Legionellaceae</taxon>
        <taxon>Legionella</taxon>
    </lineage>
</organism>
<protein>
    <recommendedName>
        <fullName evidence="1">Peptide chain release factor 3</fullName>
        <shortName evidence="1">RF-3</shortName>
    </recommendedName>
</protein>
<accession>Q5X6N0</accession>
<gene>
    <name evidence="1" type="primary">prfC</name>
    <name type="ordered locus">lpp0935</name>
</gene>
<reference key="1">
    <citation type="journal article" date="2004" name="Nat. Genet.">
        <title>Evidence in the Legionella pneumophila genome for exploitation of host cell functions and high genome plasticity.</title>
        <authorList>
            <person name="Cazalet C."/>
            <person name="Rusniok C."/>
            <person name="Brueggemann H."/>
            <person name="Zidane N."/>
            <person name="Magnier A."/>
            <person name="Ma L."/>
            <person name="Tichit M."/>
            <person name="Jarraud S."/>
            <person name="Bouchier C."/>
            <person name="Vandenesch F."/>
            <person name="Kunst F."/>
            <person name="Etienne J."/>
            <person name="Glaser P."/>
            <person name="Buchrieser C."/>
        </authorList>
    </citation>
    <scope>NUCLEOTIDE SEQUENCE [LARGE SCALE GENOMIC DNA]</scope>
    <source>
        <strain>Paris</strain>
    </source>
</reference>
<sequence length="526" mass="59476">MSDFYQDFNKRRTFAIISHPDAGKTTVTEKLLLFGGAIQLAGTVKGRKADRHATSDWMEMEKERGISITTSVMQFIHNQHVINLLDTPGHEDFSEDTYRTLTAVDSALMVIDVAKGVEERTVKLMEVCRLRDTPIMTFINKLDREGREPIDLLDEVESVLGIQCAPITWPVGMGKRFKGIYHRYQDIIYLYQQGSNAKKVEAMQIKGLDNPQLDELIGDSADELREEIELVKGASHEFNLEAYLAGKMTPVYFGSAINNFGIKELLDDFVEYAPGPQPRATQERVVSPHEETFSGFVFKIQANMDPKHRDRIAFVRVCSGSYKKGMKLNHLRIGKEVQISNALTFMAGDRSHTELALAGDIIGLHNHGTIRIGDTFTQGEHLKFTGIPNFAPELFRLVRLRDPLKSKALLKGLIELSEEGATQVFRPLNSNQLILGAVGILQFDVVAHRLKHEYKVDCIYESVNIACARWVYSEDDKAMSEFRTKAYDYLALDGGDMLMYLAPTKVNLTMAEERYPKIKFCATREH</sequence>
<feature type="chain" id="PRO_0000242188" description="Peptide chain release factor 3">
    <location>
        <begin position="1"/>
        <end position="526"/>
    </location>
</feature>
<feature type="domain" description="tr-type G">
    <location>
        <begin position="9"/>
        <end position="277"/>
    </location>
</feature>
<feature type="binding site" evidence="1">
    <location>
        <begin position="18"/>
        <end position="25"/>
    </location>
    <ligand>
        <name>GTP</name>
        <dbReference type="ChEBI" id="CHEBI:37565"/>
    </ligand>
</feature>
<feature type="binding site" evidence="1">
    <location>
        <begin position="86"/>
        <end position="90"/>
    </location>
    <ligand>
        <name>GTP</name>
        <dbReference type="ChEBI" id="CHEBI:37565"/>
    </ligand>
</feature>
<feature type="binding site" evidence="1">
    <location>
        <begin position="140"/>
        <end position="143"/>
    </location>
    <ligand>
        <name>GTP</name>
        <dbReference type="ChEBI" id="CHEBI:37565"/>
    </ligand>
</feature>